<name>LPXK_NEIMA</name>
<sequence length="344" mass="37035">MPNCFKFHTVIERHWQKPYPVLSFLLKPLSGLFAKIAAKRRTDFLSGKRQSEKLPVPVVVVGNIHAGGTGKTPIVAALVSGLQEKGVKVGIISRGYGRKSKAVHVLNAESRAEDAGDEPLLLFRKTGAPTAVGSSRAEAGRALLAAHPDIGLIVADDGLQHYALRRDVEIAVFPAADTGRTDLDLLPNGNLREPLLRLDSVDAVVVSGGKADALFRPSENMFHSRIEAGRIYRLNNPSEILDTGRLKNQTVVAVAGIAKPARFFDSLRNMGITVKRTVALPDHADISAADLPDADAVIITEKDAVKFSDGICTDNVWVLPVCAIIEPDLAAFVLERLEDVPKAV</sequence>
<evidence type="ECO:0000255" key="1">
    <source>
        <dbReference type="HAMAP-Rule" id="MF_00409"/>
    </source>
</evidence>
<reference key="1">
    <citation type="journal article" date="2000" name="Nature">
        <title>Complete DNA sequence of a serogroup A strain of Neisseria meningitidis Z2491.</title>
        <authorList>
            <person name="Parkhill J."/>
            <person name="Achtman M."/>
            <person name="James K.D."/>
            <person name="Bentley S.D."/>
            <person name="Churcher C.M."/>
            <person name="Klee S.R."/>
            <person name="Morelli G."/>
            <person name="Basham D."/>
            <person name="Brown D."/>
            <person name="Chillingworth T."/>
            <person name="Davies R.M."/>
            <person name="Davis P."/>
            <person name="Devlin K."/>
            <person name="Feltwell T."/>
            <person name="Hamlin N."/>
            <person name="Holroyd S."/>
            <person name="Jagels K."/>
            <person name="Leather S."/>
            <person name="Moule S."/>
            <person name="Mungall K.L."/>
            <person name="Quail M.A."/>
            <person name="Rajandream M.A."/>
            <person name="Rutherford K.M."/>
            <person name="Simmonds M."/>
            <person name="Skelton J."/>
            <person name="Whitehead S."/>
            <person name="Spratt B.G."/>
            <person name="Barrell B.G."/>
        </authorList>
    </citation>
    <scope>NUCLEOTIDE SEQUENCE [LARGE SCALE GENOMIC DNA]</scope>
    <source>
        <strain>DSM 15465 / Z2491</strain>
    </source>
</reference>
<dbReference type="EC" id="2.7.1.130" evidence="1"/>
<dbReference type="EMBL" id="AL157959">
    <property type="protein sequence ID" value="CAM08107.1"/>
    <property type="molecule type" value="Genomic_DNA"/>
</dbReference>
<dbReference type="PIR" id="C81933">
    <property type="entry name" value="C81933"/>
</dbReference>
<dbReference type="RefSeq" id="WP_002231989.1">
    <property type="nucleotide sequence ID" value="NC_003116.1"/>
</dbReference>
<dbReference type="SMR" id="Q9JVE4"/>
<dbReference type="EnsemblBacteria" id="CAM08107">
    <property type="protein sequence ID" value="CAM08107"/>
    <property type="gene ID" value="NMA0872"/>
</dbReference>
<dbReference type="GeneID" id="93386504"/>
<dbReference type="KEGG" id="nma:NMA0872"/>
<dbReference type="HOGENOM" id="CLU_038816_2_0_4"/>
<dbReference type="UniPathway" id="UPA00359">
    <property type="reaction ID" value="UER00482"/>
</dbReference>
<dbReference type="Proteomes" id="UP000000626">
    <property type="component" value="Chromosome"/>
</dbReference>
<dbReference type="GO" id="GO:0005886">
    <property type="term" value="C:plasma membrane"/>
    <property type="evidence" value="ECO:0007669"/>
    <property type="project" value="TreeGrafter"/>
</dbReference>
<dbReference type="GO" id="GO:0005524">
    <property type="term" value="F:ATP binding"/>
    <property type="evidence" value="ECO:0007669"/>
    <property type="project" value="UniProtKB-UniRule"/>
</dbReference>
<dbReference type="GO" id="GO:0009029">
    <property type="term" value="F:tetraacyldisaccharide 4'-kinase activity"/>
    <property type="evidence" value="ECO:0007669"/>
    <property type="project" value="UniProtKB-UniRule"/>
</dbReference>
<dbReference type="GO" id="GO:0009245">
    <property type="term" value="P:lipid A biosynthetic process"/>
    <property type="evidence" value="ECO:0007669"/>
    <property type="project" value="UniProtKB-UniRule"/>
</dbReference>
<dbReference type="GO" id="GO:0009244">
    <property type="term" value="P:lipopolysaccharide core region biosynthetic process"/>
    <property type="evidence" value="ECO:0007669"/>
    <property type="project" value="TreeGrafter"/>
</dbReference>
<dbReference type="HAMAP" id="MF_00409">
    <property type="entry name" value="LpxK"/>
    <property type="match status" value="1"/>
</dbReference>
<dbReference type="InterPro" id="IPR003758">
    <property type="entry name" value="LpxK"/>
</dbReference>
<dbReference type="InterPro" id="IPR027417">
    <property type="entry name" value="P-loop_NTPase"/>
</dbReference>
<dbReference type="NCBIfam" id="TIGR00682">
    <property type="entry name" value="lpxK"/>
    <property type="match status" value="1"/>
</dbReference>
<dbReference type="PANTHER" id="PTHR42724">
    <property type="entry name" value="TETRAACYLDISACCHARIDE 4'-KINASE"/>
    <property type="match status" value="1"/>
</dbReference>
<dbReference type="PANTHER" id="PTHR42724:SF1">
    <property type="entry name" value="TETRAACYLDISACCHARIDE 4'-KINASE, MITOCHONDRIAL-RELATED"/>
    <property type="match status" value="1"/>
</dbReference>
<dbReference type="Pfam" id="PF02606">
    <property type="entry name" value="LpxK"/>
    <property type="match status" value="1"/>
</dbReference>
<dbReference type="SUPFAM" id="SSF52540">
    <property type="entry name" value="P-loop containing nucleoside triphosphate hydrolases"/>
    <property type="match status" value="1"/>
</dbReference>
<protein>
    <recommendedName>
        <fullName evidence="1">Tetraacyldisaccharide 4'-kinase</fullName>
        <ecNumber evidence="1">2.7.1.130</ecNumber>
    </recommendedName>
    <alternativeName>
        <fullName evidence="1">Lipid A 4'-kinase</fullName>
    </alternativeName>
</protein>
<gene>
    <name evidence="1" type="primary">lpxK</name>
    <name type="ordered locus">NMA0872</name>
</gene>
<keyword id="KW-0067">ATP-binding</keyword>
<keyword id="KW-0418">Kinase</keyword>
<keyword id="KW-0441">Lipid A biosynthesis</keyword>
<keyword id="KW-0444">Lipid biosynthesis</keyword>
<keyword id="KW-0443">Lipid metabolism</keyword>
<keyword id="KW-0547">Nucleotide-binding</keyword>
<keyword id="KW-0808">Transferase</keyword>
<comment type="function">
    <text evidence="1">Transfers the gamma-phosphate of ATP to the 4'-position of a tetraacyldisaccharide 1-phosphate intermediate (termed DS-1-P) to form tetraacyldisaccharide 1,4'-bis-phosphate (lipid IVA).</text>
</comment>
<comment type="catalytic activity">
    <reaction evidence="1">
        <text>a lipid A disaccharide + ATP = a lipid IVA + ADP + H(+)</text>
        <dbReference type="Rhea" id="RHEA:67840"/>
        <dbReference type="ChEBI" id="CHEBI:15378"/>
        <dbReference type="ChEBI" id="CHEBI:30616"/>
        <dbReference type="ChEBI" id="CHEBI:176343"/>
        <dbReference type="ChEBI" id="CHEBI:176425"/>
        <dbReference type="ChEBI" id="CHEBI:456216"/>
        <dbReference type="EC" id="2.7.1.130"/>
    </reaction>
</comment>
<comment type="pathway">
    <text evidence="1">Glycolipid biosynthesis; lipid IV(A) biosynthesis; lipid IV(A) from (3R)-3-hydroxytetradecanoyl-[acyl-carrier-protein] and UDP-N-acetyl-alpha-D-glucosamine: step 6/6.</text>
</comment>
<comment type="similarity">
    <text evidence="1">Belongs to the LpxK family.</text>
</comment>
<accession>Q9JVE4</accession>
<accession>A1IQS3</accession>
<proteinExistence type="inferred from homology"/>
<organism>
    <name type="scientific">Neisseria meningitidis serogroup A / serotype 4A (strain DSM 15465 / Z2491)</name>
    <dbReference type="NCBI Taxonomy" id="122587"/>
    <lineage>
        <taxon>Bacteria</taxon>
        <taxon>Pseudomonadati</taxon>
        <taxon>Pseudomonadota</taxon>
        <taxon>Betaproteobacteria</taxon>
        <taxon>Neisseriales</taxon>
        <taxon>Neisseriaceae</taxon>
        <taxon>Neisseria</taxon>
    </lineage>
</organism>
<feature type="chain" id="PRO_0000190932" description="Tetraacyldisaccharide 4'-kinase">
    <location>
        <begin position="1"/>
        <end position="344"/>
    </location>
</feature>
<feature type="binding site" evidence="1">
    <location>
        <begin position="65"/>
        <end position="72"/>
    </location>
    <ligand>
        <name>ATP</name>
        <dbReference type="ChEBI" id="CHEBI:30616"/>
    </ligand>
</feature>